<gene>
    <name type="ordered locus">LSL_0542</name>
</gene>
<keyword id="KW-1003">Cell membrane</keyword>
<keyword id="KW-0472">Membrane</keyword>
<keyword id="KW-1185">Reference proteome</keyword>
<keyword id="KW-0812">Transmembrane</keyword>
<keyword id="KW-1133">Transmembrane helix</keyword>
<comment type="subcellular location">
    <subcellularLocation>
        <location evidence="1">Cell membrane</location>
        <topology evidence="1">Single-pass membrane protein</topology>
    </subcellularLocation>
</comment>
<comment type="similarity">
    <text evidence="1">Belongs to the UPF0154 family.</text>
</comment>
<proteinExistence type="inferred from homology"/>
<protein>
    <recommendedName>
        <fullName evidence="1">UPF0154 protein LSL_0542</fullName>
    </recommendedName>
</protein>
<evidence type="ECO:0000255" key="1">
    <source>
        <dbReference type="HAMAP-Rule" id="MF_00363"/>
    </source>
</evidence>
<feature type="chain" id="PRO_1000005632" description="UPF0154 protein LSL_0542">
    <location>
        <begin position="1"/>
        <end position="74"/>
    </location>
</feature>
<feature type="transmembrane region" description="Helical" evidence="1">
    <location>
        <begin position="5"/>
        <end position="25"/>
    </location>
</feature>
<name>Y542_LIGS1</name>
<accession>Q1WUI4</accession>
<organism>
    <name type="scientific">Ligilactobacillus salivarius (strain UCC118)</name>
    <name type="common">Lactobacillus salivarius</name>
    <dbReference type="NCBI Taxonomy" id="362948"/>
    <lineage>
        <taxon>Bacteria</taxon>
        <taxon>Bacillati</taxon>
        <taxon>Bacillota</taxon>
        <taxon>Bacilli</taxon>
        <taxon>Lactobacillales</taxon>
        <taxon>Lactobacillaceae</taxon>
        <taxon>Ligilactobacillus</taxon>
    </lineage>
</organism>
<sequence length="74" mass="8529">MSTGIWVLIVIIAAVLGFVGGFFAARKYMEDYLKKNPPINEQMMRTMMIQMGQKPSEKKLHQMMNAMKNNYGKK</sequence>
<dbReference type="EMBL" id="CP000233">
    <property type="protein sequence ID" value="ABD99351.1"/>
    <property type="molecule type" value="Genomic_DNA"/>
</dbReference>
<dbReference type="RefSeq" id="WP_003699860.1">
    <property type="nucleotide sequence ID" value="NC_007929.1"/>
</dbReference>
<dbReference type="RefSeq" id="YP_535434.1">
    <property type="nucleotide sequence ID" value="NC_007929.1"/>
</dbReference>
<dbReference type="SMR" id="Q1WUI4"/>
<dbReference type="STRING" id="362948.LSL_0542"/>
<dbReference type="DNASU" id="3976500"/>
<dbReference type="KEGG" id="lsl:LSL_0542"/>
<dbReference type="PATRIC" id="fig|362948.14.peg.620"/>
<dbReference type="HOGENOM" id="CLU_180108_0_1_9"/>
<dbReference type="OrthoDB" id="1769076at2"/>
<dbReference type="Proteomes" id="UP000006559">
    <property type="component" value="Chromosome"/>
</dbReference>
<dbReference type="GO" id="GO:0005886">
    <property type="term" value="C:plasma membrane"/>
    <property type="evidence" value="ECO:0007669"/>
    <property type="project" value="UniProtKB-SubCell"/>
</dbReference>
<dbReference type="HAMAP" id="MF_00363">
    <property type="entry name" value="UPF0154"/>
    <property type="match status" value="1"/>
</dbReference>
<dbReference type="InterPro" id="IPR005359">
    <property type="entry name" value="UPF0154"/>
</dbReference>
<dbReference type="Pfam" id="PF03672">
    <property type="entry name" value="UPF0154"/>
    <property type="match status" value="1"/>
</dbReference>
<reference key="1">
    <citation type="journal article" date="2006" name="Proc. Natl. Acad. Sci. U.S.A.">
        <title>Multireplicon genome architecture of Lactobacillus salivarius.</title>
        <authorList>
            <person name="Claesson M.J."/>
            <person name="Li Y."/>
            <person name="Leahy S."/>
            <person name="Canchaya C."/>
            <person name="van Pijkeren J.P."/>
            <person name="Cerdeno-Tarraga A.M."/>
            <person name="Parkhill J."/>
            <person name="Flynn S."/>
            <person name="O'Sullivan G.C."/>
            <person name="Collins J.K."/>
            <person name="Higgins D."/>
            <person name="Shanahan F."/>
            <person name="Fitzgerald G.F."/>
            <person name="van Sinderen D."/>
            <person name="O'Toole P.W."/>
        </authorList>
    </citation>
    <scope>NUCLEOTIDE SEQUENCE [LARGE SCALE GENOMIC DNA]</scope>
    <source>
        <strain>UCC118</strain>
    </source>
</reference>